<proteinExistence type="predicted"/>
<protein>
    <recommendedName>
        <fullName>Putative ankyrin repeat protein R863</fullName>
    </recommendedName>
</protein>
<gene>
    <name type="ordered locus">MIMI_L863</name>
</gene>
<reference key="1">
    <citation type="journal article" date="2004" name="Science">
        <title>The 1.2-megabase genome sequence of Mimivirus.</title>
        <authorList>
            <person name="Raoult D."/>
            <person name="Audic S."/>
            <person name="Robert C."/>
            <person name="Abergel C."/>
            <person name="Renesto P."/>
            <person name="Ogata H."/>
            <person name="La Scola B."/>
            <person name="Susan M."/>
            <person name="Claverie J.-M."/>
        </authorList>
    </citation>
    <scope>NUCLEOTIDE SEQUENCE [LARGE SCALE GENOMIC DNA]</scope>
    <source>
        <strain>Rowbotham-Bradford</strain>
    </source>
</reference>
<sequence>MTFLIDKMYNILPPELWIKIVDYSGEINLLLVDTNFFELFNLVDAKIDVIEYIVRNNLTDILKYIVVLKTLKHPIINKNFVPTKSLNKLLIDNCEKRRLDIIQYLINIGADINSKKNRAVRLASERGYLEIVKYLVSQGADVRANKDYAVVWASRNGHLEVVKYLVSLGANIKVDDNFAVRWASRNGYIDVVKYLTSQDANIRADNNYAVRLASENGHIDVVKYLVSLGADIRADNNYAIRHASRGGHIEVVEYLVSLGANVKSCNDCAVKFASKNGHLGVVKYLASQGADVRSENDYAFRMASENGHLEVVVYLVRQGVNVRADNNYAVRMASENGYLEIVKFLVSQGANIRSKNDYAIQKASKNGHLEVVEHLVNQGANFKSDYDCAIKLASENGHLEVVKYLVSQDADIRVNNDYAIRWASRNGHIEVVKYLVSQGADIRADNDYAVRMASENGHLEVVKYLVNLGANVKAQNNYAVGWASRNGHIGVVKYLVSQGADVRSGNNCAAIMGF</sequence>
<name>YR863_MIMIV</name>
<accession>Q5UQJ2</accession>
<dbReference type="EMBL" id="AY653733">
    <property type="protein sequence ID" value="AAV51121.1"/>
    <property type="molecule type" value="Genomic_DNA"/>
</dbReference>
<dbReference type="SMR" id="Q5UQJ2"/>
<dbReference type="Proteomes" id="UP000001134">
    <property type="component" value="Genome"/>
</dbReference>
<dbReference type="Gene3D" id="1.25.40.20">
    <property type="entry name" value="Ankyrin repeat-containing domain"/>
    <property type="match status" value="3"/>
</dbReference>
<dbReference type="InterPro" id="IPR002110">
    <property type="entry name" value="Ankyrin_rpt"/>
</dbReference>
<dbReference type="InterPro" id="IPR036770">
    <property type="entry name" value="Ankyrin_rpt-contain_sf"/>
</dbReference>
<dbReference type="PANTHER" id="PTHR44207">
    <property type="entry name" value="SURFACE ANTIGEN BSPA-LIKE-RELATED"/>
    <property type="match status" value="1"/>
</dbReference>
<dbReference type="Pfam" id="PF00023">
    <property type="entry name" value="Ank"/>
    <property type="match status" value="1"/>
</dbReference>
<dbReference type="Pfam" id="PF12796">
    <property type="entry name" value="Ank_2"/>
    <property type="match status" value="3"/>
</dbReference>
<dbReference type="Pfam" id="PF13637">
    <property type="entry name" value="Ank_4"/>
    <property type="match status" value="1"/>
</dbReference>
<dbReference type="SMART" id="SM00248">
    <property type="entry name" value="ANK"/>
    <property type="match status" value="14"/>
</dbReference>
<dbReference type="SUPFAM" id="SSF48403">
    <property type="entry name" value="Ankyrin repeat"/>
    <property type="match status" value="2"/>
</dbReference>
<dbReference type="PROSITE" id="PS50297">
    <property type="entry name" value="ANK_REP_REGION"/>
    <property type="match status" value="1"/>
</dbReference>
<dbReference type="PROSITE" id="PS50088">
    <property type="entry name" value="ANK_REPEAT"/>
    <property type="match status" value="11"/>
</dbReference>
<organism>
    <name type="scientific">Acanthamoeba polyphaga mimivirus</name>
    <name type="common">APMV</name>
    <dbReference type="NCBI Taxonomy" id="212035"/>
    <lineage>
        <taxon>Viruses</taxon>
        <taxon>Varidnaviria</taxon>
        <taxon>Bamfordvirae</taxon>
        <taxon>Nucleocytoviricota</taxon>
        <taxon>Megaviricetes</taxon>
        <taxon>Imitervirales</taxon>
        <taxon>Mimiviridae</taxon>
        <taxon>Megamimivirinae</taxon>
        <taxon>Mimivirus</taxon>
        <taxon>Mimivirus bradfordmassiliense</taxon>
    </lineage>
</organism>
<feature type="chain" id="PRO_0000067217" description="Putative ankyrin repeat protein R863">
    <location>
        <begin position="1"/>
        <end position="514"/>
    </location>
</feature>
<feature type="repeat" description="ANK 1">
    <location>
        <begin position="45"/>
        <end position="74"/>
    </location>
</feature>
<feature type="repeat" description="ANK 2">
    <location>
        <begin position="84"/>
        <end position="114"/>
    </location>
</feature>
<feature type="repeat" description="ANK 3">
    <location>
        <begin position="115"/>
        <end position="144"/>
    </location>
</feature>
<feature type="repeat" description="ANK 4">
    <location>
        <begin position="146"/>
        <end position="174"/>
    </location>
</feature>
<feature type="repeat" description="ANK 5">
    <location>
        <begin position="176"/>
        <end position="204"/>
    </location>
</feature>
<feature type="repeat" description="ANK 6">
    <location>
        <begin position="205"/>
        <end position="234"/>
    </location>
</feature>
<feature type="repeat" description="ANK 7">
    <location>
        <begin position="236"/>
        <end position="264"/>
    </location>
</feature>
<feature type="repeat" description="ANK 8">
    <location>
        <begin position="266"/>
        <end position="294"/>
    </location>
</feature>
<feature type="repeat" description="ANK 9">
    <location>
        <begin position="295"/>
        <end position="324"/>
    </location>
</feature>
<feature type="repeat" description="ANK 10">
    <location>
        <begin position="325"/>
        <end position="354"/>
    </location>
</feature>
<feature type="repeat" description="ANK 11">
    <location>
        <begin position="356"/>
        <end position="384"/>
    </location>
</feature>
<feature type="repeat" description="ANK 12">
    <location>
        <begin position="385"/>
        <end position="414"/>
    </location>
</feature>
<feature type="repeat" description="ANK 13">
    <location>
        <begin position="415"/>
        <end position="444"/>
    </location>
</feature>
<feature type="repeat" description="ANK 14">
    <location>
        <begin position="446"/>
        <end position="474"/>
    </location>
</feature>
<feature type="repeat" description="ANK 15">
    <location>
        <begin position="476"/>
        <end position="504"/>
    </location>
</feature>
<organismHost>
    <name type="scientific">Acanthamoeba polyphaga</name>
    <name type="common">Amoeba</name>
    <dbReference type="NCBI Taxonomy" id="5757"/>
</organismHost>
<keyword id="KW-0040">ANK repeat</keyword>
<keyword id="KW-1185">Reference proteome</keyword>
<keyword id="KW-0677">Repeat</keyword>